<organism>
    <name type="scientific">Aspergillus flavus (strain ATCC 200026 / FGSC A1120 / IAM 13836 / NRRL 3357 / JCM 12722 / SRRC 167)</name>
    <dbReference type="NCBI Taxonomy" id="332952"/>
    <lineage>
        <taxon>Eukaryota</taxon>
        <taxon>Fungi</taxon>
        <taxon>Dikarya</taxon>
        <taxon>Ascomycota</taxon>
        <taxon>Pezizomycotina</taxon>
        <taxon>Eurotiomycetes</taxon>
        <taxon>Eurotiomycetidae</taxon>
        <taxon>Eurotiales</taxon>
        <taxon>Aspergillaceae</taxon>
        <taxon>Aspergillus</taxon>
        <taxon>Aspergillus subgen. Circumdati</taxon>
    </lineage>
</organism>
<accession>B8NPL7</accession>
<evidence type="ECO:0000250" key="1"/>
<evidence type="ECO:0000255" key="2"/>
<evidence type="ECO:0000255" key="3">
    <source>
        <dbReference type="PROSITE-ProRule" id="PRU01164"/>
    </source>
</evidence>
<evidence type="ECO:0000305" key="4"/>
<dbReference type="EC" id="3.2.1.21"/>
<dbReference type="EMBL" id="EQ963482">
    <property type="protein sequence ID" value="EED47440.1"/>
    <property type="molecule type" value="Genomic_DNA"/>
</dbReference>
<dbReference type="RefSeq" id="XP_002382282.1">
    <property type="nucleotide sequence ID" value="XM_002382241.1"/>
</dbReference>
<dbReference type="SMR" id="B8NPL7"/>
<dbReference type="STRING" id="332952.B8NPL7"/>
<dbReference type="GlyCosmos" id="B8NPL7">
    <property type="glycosylation" value="4 sites, No reported glycans"/>
</dbReference>
<dbReference type="EnsemblFungi" id="EED47440">
    <property type="protein sequence ID" value="EED47440"/>
    <property type="gene ID" value="AFLA_000810"/>
</dbReference>
<dbReference type="VEuPathDB" id="FungiDB:AFLA_011405"/>
<dbReference type="eggNOG" id="ENOG502SMPY">
    <property type="taxonomic scope" value="Eukaryota"/>
</dbReference>
<dbReference type="HOGENOM" id="CLU_004542_4_0_1"/>
<dbReference type="OMA" id="DVKHNPA"/>
<dbReference type="UniPathway" id="UPA00696"/>
<dbReference type="GO" id="GO:0005576">
    <property type="term" value="C:extracellular region"/>
    <property type="evidence" value="ECO:0007669"/>
    <property type="project" value="UniProtKB-SubCell"/>
</dbReference>
<dbReference type="GO" id="GO:0008422">
    <property type="term" value="F:beta-glucosidase activity"/>
    <property type="evidence" value="ECO:0007669"/>
    <property type="project" value="UniProtKB-EC"/>
</dbReference>
<dbReference type="GO" id="GO:0030245">
    <property type="term" value="P:cellulose catabolic process"/>
    <property type="evidence" value="ECO:0007669"/>
    <property type="project" value="UniProtKB-UniPathway"/>
</dbReference>
<dbReference type="FunFam" id="3.20.20.300:FF:000006">
    <property type="entry name" value="Beta-glucosidase H"/>
    <property type="match status" value="1"/>
</dbReference>
<dbReference type="FunFam" id="2.60.40.10:FF:000495">
    <property type="entry name" value="Periplasmic beta-glucosidase"/>
    <property type="match status" value="1"/>
</dbReference>
<dbReference type="Gene3D" id="2.60.120.260">
    <property type="entry name" value="Galactose-binding domain-like"/>
    <property type="match status" value="1"/>
</dbReference>
<dbReference type="Gene3D" id="3.40.50.1700">
    <property type="entry name" value="Glycoside hydrolase family 3 C-terminal domain"/>
    <property type="match status" value="1"/>
</dbReference>
<dbReference type="Gene3D" id="3.20.20.300">
    <property type="entry name" value="Glycoside hydrolase, family 3, N-terminal domain"/>
    <property type="match status" value="1"/>
</dbReference>
<dbReference type="Gene3D" id="2.60.40.10">
    <property type="entry name" value="Immunoglobulins"/>
    <property type="match status" value="1"/>
</dbReference>
<dbReference type="InterPro" id="IPR050288">
    <property type="entry name" value="Cellulose_deg_GH3"/>
</dbReference>
<dbReference type="InterPro" id="IPR026891">
    <property type="entry name" value="Fn3-like"/>
</dbReference>
<dbReference type="InterPro" id="IPR002772">
    <property type="entry name" value="Glyco_hydro_3_C"/>
</dbReference>
<dbReference type="InterPro" id="IPR036881">
    <property type="entry name" value="Glyco_hydro_3_C_sf"/>
</dbReference>
<dbReference type="InterPro" id="IPR001764">
    <property type="entry name" value="Glyco_hydro_3_N"/>
</dbReference>
<dbReference type="InterPro" id="IPR036962">
    <property type="entry name" value="Glyco_hydro_3_N_sf"/>
</dbReference>
<dbReference type="InterPro" id="IPR017853">
    <property type="entry name" value="Glycoside_hydrolase_SF"/>
</dbReference>
<dbReference type="InterPro" id="IPR013783">
    <property type="entry name" value="Ig-like_fold"/>
</dbReference>
<dbReference type="InterPro" id="IPR037524">
    <property type="entry name" value="PA14/GLEYA"/>
</dbReference>
<dbReference type="InterPro" id="IPR011658">
    <property type="entry name" value="PA14_dom"/>
</dbReference>
<dbReference type="PANTHER" id="PTHR42715">
    <property type="entry name" value="BETA-GLUCOSIDASE"/>
    <property type="match status" value="1"/>
</dbReference>
<dbReference type="PANTHER" id="PTHR42715:SF17">
    <property type="entry name" value="BETA-GLUCOSIDASE H-RELATED"/>
    <property type="match status" value="1"/>
</dbReference>
<dbReference type="Pfam" id="PF14310">
    <property type="entry name" value="Fn3-like"/>
    <property type="match status" value="1"/>
</dbReference>
<dbReference type="Pfam" id="PF00933">
    <property type="entry name" value="Glyco_hydro_3"/>
    <property type="match status" value="1"/>
</dbReference>
<dbReference type="Pfam" id="PF01915">
    <property type="entry name" value="Glyco_hydro_3_C"/>
    <property type="match status" value="1"/>
</dbReference>
<dbReference type="Pfam" id="PF07691">
    <property type="entry name" value="PA14"/>
    <property type="match status" value="1"/>
</dbReference>
<dbReference type="PRINTS" id="PR00133">
    <property type="entry name" value="GLHYDRLASE3"/>
</dbReference>
<dbReference type="SMART" id="SM01217">
    <property type="entry name" value="Fn3_like"/>
    <property type="match status" value="1"/>
</dbReference>
<dbReference type="SMART" id="SM00758">
    <property type="entry name" value="PA14"/>
    <property type="match status" value="1"/>
</dbReference>
<dbReference type="SUPFAM" id="SSF51445">
    <property type="entry name" value="(Trans)glycosidases"/>
    <property type="match status" value="1"/>
</dbReference>
<dbReference type="SUPFAM" id="SSF56988">
    <property type="entry name" value="Anthrax protective antigen"/>
    <property type="match status" value="1"/>
</dbReference>
<dbReference type="SUPFAM" id="SSF52279">
    <property type="entry name" value="Beta-D-glucan exohydrolase, C-terminal domain"/>
    <property type="match status" value="1"/>
</dbReference>
<dbReference type="PROSITE" id="PS51820">
    <property type="entry name" value="PA14"/>
    <property type="match status" value="1"/>
</dbReference>
<reference key="1">
    <citation type="journal article" date="2015" name="Genome Announc.">
        <title>Genome sequence of Aspergillus flavus NRRL 3357, a strain that causes aflatoxin contamination of food and feed.</title>
        <authorList>
            <person name="Nierman W.C."/>
            <person name="Yu J."/>
            <person name="Fedorova-Abrams N.D."/>
            <person name="Losada L."/>
            <person name="Cleveland T.E."/>
            <person name="Bhatnagar D."/>
            <person name="Bennett J.W."/>
            <person name="Dean R."/>
            <person name="Payne G.A."/>
        </authorList>
    </citation>
    <scope>NUCLEOTIDE SEQUENCE [LARGE SCALE GENOMIC DNA]</scope>
    <source>
        <strain>ATCC 200026 / FGSC A1120 / IAM 13836 / NRRL 3357 / JCM 12722 / SRRC 167</strain>
    </source>
</reference>
<gene>
    <name type="primary">bglH</name>
    <name type="ORF">AFLA_000810</name>
</gene>
<protein>
    <recommendedName>
        <fullName>Probable beta-glucosidase H</fullName>
        <ecNumber>3.2.1.21</ecNumber>
    </recommendedName>
    <alternativeName>
        <fullName>Beta-D-glucoside glucohydrolase H</fullName>
    </alternativeName>
    <alternativeName>
        <fullName>Cellobiase H</fullName>
    </alternativeName>
    <alternativeName>
        <fullName>Gentiobiase H</fullName>
    </alternativeName>
</protein>
<proteinExistence type="inferred from homology"/>
<name>BGLH_ASPFN</name>
<feature type="chain" id="PRO_0000394878" description="Probable beta-glucosidase H">
    <location>
        <begin position="1"/>
        <end position="827"/>
    </location>
</feature>
<feature type="domain" description="PA14" evidence="3">
    <location>
        <begin position="387"/>
        <end position="546"/>
    </location>
</feature>
<feature type="active site" evidence="1">
    <location>
        <position position="223"/>
    </location>
</feature>
<feature type="glycosylation site" description="N-linked (GlcNAc...) asparagine" evidence="2">
    <location>
        <position position="471"/>
    </location>
</feature>
<feature type="glycosylation site" description="N-linked (GlcNAc...) asparagine" evidence="2">
    <location>
        <position position="594"/>
    </location>
</feature>
<feature type="glycosylation site" description="N-linked (GlcNAc...) asparagine" evidence="2">
    <location>
        <position position="600"/>
    </location>
</feature>
<feature type="glycosylation site" description="N-linked (GlcNAc...) asparagine" evidence="2">
    <location>
        <position position="625"/>
    </location>
</feature>
<keyword id="KW-0119">Carbohydrate metabolism</keyword>
<keyword id="KW-0136">Cellulose degradation</keyword>
<keyword id="KW-0325">Glycoprotein</keyword>
<keyword id="KW-0326">Glycosidase</keyword>
<keyword id="KW-0378">Hydrolase</keyword>
<keyword id="KW-0624">Polysaccharide degradation</keyword>
<keyword id="KW-0964">Secreted</keyword>
<comment type="function">
    <text evidence="1">Beta-glucosidases are one of a number of cellulolytic enzymes involved in the degradation of cellulosic biomass. Catalyzes the last step releasing glucose from the inhibitory cellobiose (By similarity).</text>
</comment>
<comment type="catalytic activity">
    <reaction>
        <text>Hydrolysis of terminal, non-reducing beta-D-glucosyl residues with release of beta-D-glucose.</text>
        <dbReference type="EC" id="3.2.1.21"/>
    </reaction>
</comment>
<comment type="pathway">
    <text>Glycan metabolism; cellulose degradation.</text>
</comment>
<comment type="subcellular location">
    <subcellularLocation>
        <location evidence="1">Secreted</location>
    </subcellularLocation>
</comment>
<comment type="similarity">
    <text evidence="4">Belongs to the glycosyl hydrolase 3 family.</text>
</comment>
<sequence>MALDIDYVLSHISQEDKIALLAGIDFWHTHPIPELNVPSIRSTDGPNGIRGTKFFAGVPAACLPCGTALASTWDQNLLREVGVLIGKECLAKGAHCWLGPTINMPRSPLGGRGFESFAEDPHLAGAMAASMITGCESTGVISAVKHFVGNDQEHERRAVDVLVTQRALREIYLRPFQIVARDAGPGALMTSYNKINGKHVVESKEMLDMVRQEWKWNPLIMSDWLGTYTTIDSMNAGLDLEMPGPSRYRGRYVESALQARLIKESTIDSRARKVLEFVQQASRAPVSAVETGRDYPEDRALNRNLCANSIVLLKNQNDILPLPKTIKKIALVGSHVRTPAISGGGSASLEPYYTVSLYDAVSEALPHTEILYEVGAYAHKMLPVIDRLLTNAVMHFYNEPVGTERILRATQRMSKTAFQLMDFNAPELNRGLFYATLTGDFTPDVSGVWDFGLTVFGTGLLYVDDELVVDNTTHQTRGTAFFGKGTVQELGSKTLNAEQTYKIRIEYGSANTSPMKAIGVVHFGGGAAHLGACLHVDSAEMVRSAVKAAAEADYTILCTGLNHEWESEGFDRSHMDLPPGIDALITSVLDVAANKTVIVNQSGTPVTMPWADRARGIVQAWYGGNETGHGIADVIFGDVNPSGKLPLSWPVDVKHNPAYLNYASVGGRVLYGEDVYVGYRYYEKVGREVLFPFGHGLSYTTFTVSPDVVFSQEVFRPEEPPTAAVKIKNTGKVAGAQVLQLYISAPHSPTPRPTKELHGFTKVLLQPGEERVAHIRMDKYATNFWDEIEGMWKSEEGIYEALIGTSSQNILAKGTFRVDRTRYWLGL</sequence>